<keyword id="KW-0344">Guanine-nucleotide releasing factor</keyword>
<keyword id="KW-0479">Metal-binding</keyword>
<keyword id="KW-0653">Protein transport</keyword>
<keyword id="KW-1185">Reference proteome</keyword>
<keyword id="KW-0813">Transport</keyword>
<keyword id="KW-0862">Zinc</keyword>
<accession>P32601</accession>
<accession>D6W427</accession>
<accession>Q12299</accession>
<accession>Q3S1N1</accession>
<name>MSS4_YEAST</name>
<gene>
    <name type="primary">DSS4</name>
    <name type="ordered locus">YPR017C</name>
    <name type="ORF">LPZ16C</name>
    <name type="ORF">YP9531.11C</name>
</gene>
<proteinExistence type="evidence at protein level"/>
<protein>
    <recommendedName>
        <fullName>Protein DSS4</fullName>
    </recommendedName>
</protein>
<dbReference type="EMBL" id="X70495">
    <property type="protein sequence ID" value="CAA49903.1"/>
    <property type="molecule type" value="Genomic_DNA"/>
</dbReference>
<dbReference type="EMBL" id="S54550">
    <property type="protein sequence ID" value="AAA13721.1"/>
    <property type="molecule type" value="Genomic_DNA"/>
</dbReference>
<dbReference type="EMBL" id="U31900">
    <property type="protein sequence ID" value="AAA97595.1"/>
    <property type="molecule type" value="Genomic_DNA"/>
</dbReference>
<dbReference type="EMBL" id="Z71255">
    <property type="protein sequence ID" value="CAA95013.1"/>
    <property type="molecule type" value="Genomic_DNA"/>
</dbReference>
<dbReference type="EMBL" id="Z49919">
    <property type="protein sequence ID" value="CAA90162.1"/>
    <property type="molecule type" value="Genomic_DNA"/>
</dbReference>
<dbReference type="EMBL" id="BK006949">
    <property type="protein sequence ID" value="DAA11443.1"/>
    <property type="molecule type" value="Genomic_DNA"/>
</dbReference>
<dbReference type="PIR" id="S57551">
    <property type="entry name" value="S57551"/>
</dbReference>
<dbReference type="RefSeq" id="NP_015342.1">
    <property type="nucleotide sequence ID" value="NM_001184114.1"/>
</dbReference>
<dbReference type="SMR" id="P32601"/>
<dbReference type="BioGRID" id="36194">
    <property type="interactions" value="100"/>
</dbReference>
<dbReference type="DIP" id="DIP-1423N"/>
<dbReference type="FunCoup" id="P32601">
    <property type="interactions" value="90"/>
</dbReference>
<dbReference type="IntAct" id="P32601">
    <property type="interactions" value="18"/>
</dbReference>
<dbReference type="MINT" id="P32601"/>
<dbReference type="STRING" id="4932.YPR017C"/>
<dbReference type="PaxDb" id="4932-YPR017C"/>
<dbReference type="PeptideAtlas" id="P32601"/>
<dbReference type="EnsemblFungi" id="YPR017C_mRNA">
    <property type="protein sequence ID" value="YPR017C"/>
    <property type="gene ID" value="YPR017C"/>
</dbReference>
<dbReference type="GeneID" id="856128"/>
<dbReference type="KEGG" id="sce:YPR017C"/>
<dbReference type="AGR" id="SGD:S000006221"/>
<dbReference type="SGD" id="S000006221">
    <property type="gene designation" value="DSS4"/>
</dbReference>
<dbReference type="VEuPathDB" id="FungiDB:YPR017C"/>
<dbReference type="eggNOG" id="KOG4113">
    <property type="taxonomic scope" value="Eukaryota"/>
</dbReference>
<dbReference type="HOGENOM" id="CLU_124782_0_0_1"/>
<dbReference type="InParanoid" id="P32601"/>
<dbReference type="OMA" id="GPIGMVC"/>
<dbReference type="OrthoDB" id="30840at2759"/>
<dbReference type="BioCyc" id="YEAST:G3O-34177-MONOMER"/>
<dbReference type="BioGRID-ORCS" id="856128">
    <property type="hits" value="6 hits in 10 CRISPR screens"/>
</dbReference>
<dbReference type="PRO" id="PR:P32601"/>
<dbReference type="Proteomes" id="UP000002311">
    <property type="component" value="Chromosome XVI"/>
</dbReference>
<dbReference type="RNAct" id="P32601">
    <property type="molecule type" value="protein"/>
</dbReference>
<dbReference type="GO" id="GO:0005829">
    <property type="term" value="C:cytosol"/>
    <property type="evidence" value="ECO:0000314"/>
    <property type="project" value="SGD"/>
</dbReference>
<dbReference type="GO" id="GO:0016020">
    <property type="term" value="C:membrane"/>
    <property type="evidence" value="ECO:0000314"/>
    <property type="project" value="SGD"/>
</dbReference>
<dbReference type="GO" id="GO:0005085">
    <property type="term" value="F:guanyl-nucleotide exchange factor activity"/>
    <property type="evidence" value="ECO:0000314"/>
    <property type="project" value="SGD"/>
</dbReference>
<dbReference type="GO" id="GO:0008270">
    <property type="term" value="F:zinc ion binding"/>
    <property type="evidence" value="ECO:0000314"/>
    <property type="project" value="SGD"/>
</dbReference>
<dbReference type="GO" id="GO:0006892">
    <property type="term" value="P:post-Golgi vesicle-mediated transport"/>
    <property type="evidence" value="ECO:0000315"/>
    <property type="project" value="SGD"/>
</dbReference>
<dbReference type="GO" id="GO:0015031">
    <property type="term" value="P:protein transport"/>
    <property type="evidence" value="ECO:0007669"/>
    <property type="project" value="UniProtKB-KW"/>
</dbReference>
<dbReference type="GO" id="GO:0007264">
    <property type="term" value="P:small GTPase-mediated signal transduction"/>
    <property type="evidence" value="ECO:0007669"/>
    <property type="project" value="InterPro"/>
</dbReference>
<dbReference type="CDD" id="cd00246">
    <property type="entry name" value="RabGEF"/>
    <property type="match status" value="1"/>
</dbReference>
<dbReference type="FunFam" id="2.170.150.10:FF:000011">
    <property type="entry name" value="Dss4p"/>
    <property type="match status" value="1"/>
</dbReference>
<dbReference type="Gene3D" id="2.170.150.10">
    <property type="entry name" value="Metal Binding Protein, Guanine Nucleotide Exchange Factor, Chain A"/>
    <property type="match status" value="1"/>
</dbReference>
<dbReference type="InterPro" id="IPR007515">
    <property type="entry name" value="Mss4"/>
</dbReference>
<dbReference type="InterPro" id="IPR011057">
    <property type="entry name" value="Mss4-like_sf"/>
</dbReference>
<dbReference type="InterPro" id="IPR011323">
    <property type="entry name" value="Mss4/transl-control_tumour"/>
</dbReference>
<dbReference type="PANTHER" id="PTHR13276">
    <property type="entry name" value="GUANINE NUCLEOTIDE EXCHANGE FACTOR MSS4"/>
    <property type="match status" value="1"/>
</dbReference>
<dbReference type="PANTHER" id="PTHR13276:SF0">
    <property type="entry name" value="GUANINE NUCLEOTIDE EXCHANGE FACTOR MSS4"/>
    <property type="match status" value="1"/>
</dbReference>
<dbReference type="Pfam" id="PF04421">
    <property type="entry name" value="Mss4"/>
    <property type="match status" value="1"/>
</dbReference>
<dbReference type="SUPFAM" id="SSF51316">
    <property type="entry name" value="Mss4-like"/>
    <property type="match status" value="1"/>
</dbReference>
<dbReference type="PROSITE" id="PS51796">
    <property type="entry name" value="MSS4"/>
    <property type="match status" value="1"/>
</dbReference>
<reference key="1">
    <citation type="journal article" date="1993" name="Nature">
        <title>DSS4-1 is a dominant suppressor of sec4-8 that encodes a nucleotide exchange protein that aids Sec4p function.</title>
        <authorList>
            <person name="Moya M."/>
            <person name="Roberts D."/>
            <person name="Novick P."/>
        </authorList>
    </citation>
    <scope>NUCLEOTIDE SEQUENCE [GENOMIC DNA]</scope>
</reference>
<reference key="2">
    <citation type="journal article" date="1997" name="Nature">
        <title>The nucleotide sequence of Saccharomyces cerevisiae chromosome XVI.</title>
        <authorList>
            <person name="Bussey H."/>
            <person name="Storms R.K."/>
            <person name="Ahmed A."/>
            <person name="Albermann K."/>
            <person name="Allen E."/>
            <person name="Ansorge W."/>
            <person name="Araujo R."/>
            <person name="Aparicio A."/>
            <person name="Barrell B.G."/>
            <person name="Badcock K."/>
            <person name="Benes V."/>
            <person name="Botstein D."/>
            <person name="Bowman S."/>
            <person name="Brueckner M."/>
            <person name="Carpenter J."/>
            <person name="Cherry J.M."/>
            <person name="Chung E."/>
            <person name="Churcher C.M."/>
            <person name="Coster F."/>
            <person name="Davis K."/>
            <person name="Davis R.W."/>
            <person name="Dietrich F.S."/>
            <person name="Delius H."/>
            <person name="DiPaolo T."/>
            <person name="Dubois E."/>
            <person name="Duesterhoeft A."/>
            <person name="Duncan M."/>
            <person name="Floeth M."/>
            <person name="Fortin N."/>
            <person name="Friesen J.D."/>
            <person name="Fritz C."/>
            <person name="Goffeau A."/>
            <person name="Hall J."/>
            <person name="Hebling U."/>
            <person name="Heumann K."/>
            <person name="Hilbert H."/>
            <person name="Hillier L.W."/>
            <person name="Hunicke-Smith S."/>
            <person name="Hyman R.W."/>
            <person name="Johnston M."/>
            <person name="Kalman S."/>
            <person name="Kleine K."/>
            <person name="Komp C."/>
            <person name="Kurdi O."/>
            <person name="Lashkari D."/>
            <person name="Lew H."/>
            <person name="Lin A."/>
            <person name="Lin D."/>
            <person name="Louis E.J."/>
            <person name="Marathe R."/>
            <person name="Messenguy F."/>
            <person name="Mewes H.-W."/>
            <person name="Mirtipati S."/>
            <person name="Moestl D."/>
            <person name="Mueller-Auer S."/>
            <person name="Namath A."/>
            <person name="Nentwich U."/>
            <person name="Oefner P."/>
            <person name="Pearson D."/>
            <person name="Petel F.X."/>
            <person name="Pohl T.M."/>
            <person name="Purnelle B."/>
            <person name="Rajandream M.A."/>
            <person name="Rechmann S."/>
            <person name="Rieger M."/>
            <person name="Riles L."/>
            <person name="Roberts D."/>
            <person name="Schaefer M."/>
            <person name="Scharfe M."/>
            <person name="Scherens B."/>
            <person name="Schramm S."/>
            <person name="Schroeder M."/>
            <person name="Sdicu A.-M."/>
            <person name="Tettelin H."/>
            <person name="Urrestarazu L.A."/>
            <person name="Ushinsky S."/>
            <person name="Vierendeels F."/>
            <person name="Vissers S."/>
            <person name="Voss H."/>
            <person name="Walsh S.V."/>
            <person name="Wambutt R."/>
            <person name="Wang Y."/>
            <person name="Wedler E."/>
            <person name="Wedler H."/>
            <person name="Winnett E."/>
            <person name="Zhong W.-W."/>
            <person name="Zollner A."/>
            <person name="Vo D.H."/>
            <person name="Hani J."/>
        </authorList>
    </citation>
    <scope>NUCLEOTIDE SEQUENCE [LARGE SCALE GENOMIC DNA]</scope>
    <source>
        <strain>ATCC 204508 / S288c</strain>
    </source>
</reference>
<reference key="3">
    <citation type="journal article" date="2014" name="G3 (Bethesda)">
        <title>The reference genome sequence of Saccharomyces cerevisiae: Then and now.</title>
        <authorList>
            <person name="Engel S.R."/>
            <person name="Dietrich F.S."/>
            <person name="Fisk D.G."/>
            <person name="Binkley G."/>
            <person name="Balakrishnan R."/>
            <person name="Costanzo M.C."/>
            <person name="Dwight S.S."/>
            <person name="Hitz B.C."/>
            <person name="Karra K."/>
            <person name="Nash R.S."/>
            <person name="Weng S."/>
            <person name="Wong E.D."/>
            <person name="Lloyd P."/>
            <person name="Skrzypek M.S."/>
            <person name="Miyasato S.R."/>
            <person name="Simison M."/>
            <person name="Cherry J.M."/>
        </authorList>
    </citation>
    <scope>GENOME REANNOTATION</scope>
    <source>
        <strain>ATCC 204508 / S288c</strain>
    </source>
</reference>
<reference key="4">
    <citation type="journal article" date="2003" name="Nature">
        <title>Global analysis of protein expression in yeast.</title>
        <authorList>
            <person name="Ghaemmaghami S."/>
            <person name="Huh W.-K."/>
            <person name="Bower K."/>
            <person name="Howson R.W."/>
            <person name="Belle A."/>
            <person name="Dephoure N."/>
            <person name="O'Shea E.K."/>
            <person name="Weissman J.S."/>
        </authorList>
    </citation>
    <scope>LEVEL OF PROTEIN EXPRESSION [LARGE SCALE ANALYSIS]</scope>
</reference>
<sequence length="143" mass="16126">MSKATCSFEGCHSAVITINDDNIINLPEQVHSEFKLLENRTMRDATPSESNFLVVPDVWDFDNVGVSREIPSSILGDLSDKSDFVFEYGNSSWKIKKCLKYLICADCDKGPIGIICKVQDQTKNEERVLHLLSLRSLQIMGRN</sequence>
<organism>
    <name type="scientific">Saccharomyces cerevisiae (strain ATCC 204508 / S288c)</name>
    <name type="common">Baker's yeast</name>
    <dbReference type="NCBI Taxonomy" id="559292"/>
    <lineage>
        <taxon>Eukaryota</taxon>
        <taxon>Fungi</taxon>
        <taxon>Dikarya</taxon>
        <taxon>Ascomycota</taxon>
        <taxon>Saccharomycotina</taxon>
        <taxon>Saccharomycetes</taxon>
        <taxon>Saccharomycetales</taxon>
        <taxon>Saccharomycetaceae</taxon>
        <taxon>Saccharomyces</taxon>
    </lineage>
</organism>
<comment type="function">
    <text>Guanine-nucleotide-releasing protein that acts on SEC4. Might play a general role in vesicular transport.</text>
</comment>
<comment type="miscellaneous">
    <text evidence="2">Present with 1500 molecules/cell in log phase SD medium.</text>
</comment>
<comment type="similarity">
    <text evidence="1">Belongs to the DSS4/MSS4 family.</text>
</comment>
<evidence type="ECO:0000255" key="1">
    <source>
        <dbReference type="PROSITE-ProRule" id="PRU01132"/>
    </source>
</evidence>
<evidence type="ECO:0000269" key="2">
    <source>
    </source>
</evidence>
<evidence type="ECO:0000305" key="3"/>
<feature type="chain" id="PRO_0000174180" description="Protein DSS4">
    <location>
        <begin position="1"/>
        <end position="143"/>
    </location>
</feature>
<feature type="domain" description="MSS4" evidence="1">
    <location>
        <begin position="1"/>
        <end position="131"/>
    </location>
</feature>
<feature type="binding site" evidence="1">
    <location>
        <position position="6"/>
    </location>
    <ligand>
        <name>Zn(2+)</name>
        <dbReference type="ChEBI" id="CHEBI:29105"/>
    </ligand>
</feature>
<feature type="binding site" evidence="1">
    <location>
        <position position="11"/>
    </location>
    <ligand>
        <name>Zn(2+)</name>
        <dbReference type="ChEBI" id="CHEBI:29105"/>
    </ligand>
</feature>
<feature type="binding site" evidence="1">
    <location>
        <position position="104"/>
    </location>
    <ligand>
        <name>Zn(2+)</name>
        <dbReference type="ChEBI" id="CHEBI:29105"/>
    </ligand>
</feature>
<feature type="binding site" evidence="1">
    <location>
        <position position="107"/>
    </location>
    <ligand>
        <name>Zn(2+)</name>
        <dbReference type="ChEBI" id="CHEBI:29105"/>
    </ligand>
</feature>
<feature type="sequence variant" description="In DSS4-1; a dominant suppressor of SEC4-8.">
    <original>D</original>
    <variation>G</variation>
    <location>
        <position position="108"/>
    </location>
</feature>
<feature type="sequence conflict" description="In Ref. 1; CAA49903/AAA13721." evidence="3" ref="1">
    <original>S</original>
    <variation>T</variation>
    <location>
        <position position="136"/>
    </location>
</feature>